<organism>
    <name type="scientific">Oxytricha trifallax</name>
    <name type="common">Sterkiella histriomuscorum</name>
    <dbReference type="NCBI Taxonomy" id="94289"/>
    <lineage>
        <taxon>Eukaryota</taxon>
        <taxon>Sar</taxon>
        <taxon>Alveolata</taxon>
        <taxon>Ciliophora</taxon>
        <taxon>Intramacronucleata</taxon>
        <taxon>Spirotrichea</taxon>
        <taxon>Stichotrichia</taxon>
        <taxon>Sporadotrichida</taxon>
        <taxon>Oxytrichidae</taxon>
        <taxon>Stylonychinae</taxon>
        <taxon>Sterkiella</taxon>
    </lineage>
</organism>
<keyword id="KW-0472">Membrane</keyword>
<keyword id="KW-0677">Repeat</keyword>
<keyword id="KW-0812">Transmembrane</keyword>
<keyword id="KW-1133">Transmembrane helix</keyword>
<keyword id="KW-0813">Transport</keyword>
<proteinExistence type="evidence at transcript level"/>
<reference key="1">
    <citation type="journal article" date="1996" name="Mol. Biol. Evol.">
        <title>Internal eliminated sequences interrupting the Oxytricha 81 locus: allelic divergence, conservation, conversions, and possible transposon origins.</title>
        <authorList>
            <person name="Seegmiller A."/>
            <person name="Williams K.R."/>
            <person name="Hammersmith R.L."/>
            <person name="Doak T.G."/>
            <person name="Witherspoon D."/>
            <person name="Messick T."/>
            <person name="Storjohann L.L."/>
            <person name="Herrick G."/>
        </authorList>
    </citation>
    <scope>NUCLEOTIDE SEQUENCE [GENOMIC DNA]</scope>
    <source>
        <strain>JRB310</strain>
    </source>
</reference>
<reference key="2">
    <citation type="journal article" date="1991" name="Nucleic Acids Res.">
        <title>Expression of the gene encoded by a family of macronuclear chromosomes generated by alternative DNA processing in Oxytricha fallax.</title>
        <authorList>
            <person name="Williams K.R."/>
            <person name="Herrick G."/>
        </authorList>
    </citation>
    <scope>NUCLEOTIDE SEQUENCE [MRNA] OF 4-371</scope>
</reference>
<comment type="subcellular location">
    <subcellularLocation>
        <location evidence="2">Membrane</location>
        <topology evidence="2">Multi-pass membrane protein</topology>
    </subcellularLocation>
</comment>
<comment type="similarity">
    <text evidence="2">Belongs to the mitochondrial carrier (TC 2.A.29) family.</text>
</comment>
<dbReference type="EMBL" id="L20237">
    <property type="protein sequence ID" value="AAA75394.1"/>
    <property type="molecule type" value="Genomic_DNA"/>
</dbReference>
<dbReference type="EMBL" id="M63174">
    <property type="protein sequence ID" value="AAA62489.1"/>
    <property type="molecule type" value="mRNA"/>
</dbReference>
<dbReference type="SMR" id="Q27151"/>
<dbReference type="GO" id="GO:0016020">
    <property type="term" value="C:membrane"/>
    <property type="evidence" value="ECO:0007669"/>
    <property type="project" value="UniProtKB-SubCell"/>
</dbReference>
<dbReference type="Gene3D" id="1.50.40.10">
    <property type="entry name" value="Mitochondrial carrier domain"/>
    <property type="match status" value="1"/>
</dbReference>
<dbReference type="InterPro" id="IPR050391">
    <property type="entry name" value="Mito_Metabolite_Transporter"/>
</dbReference>
<dbReference type="InterPro" id="IPR018108">
    <property type="entry name" value="Mitochondrial_sb/sol_carrier"/>
</dbReference>
<dbReference type="InterPro" id="IPR023395">
    <property type="entry name" value="Mt_carrier_dom_sf"/>
</dbReference>
<dbReference type="PANTHER" id="PTHR45618">
    <property type="entry name" value="MITOCHONDRIAL DICARBOXYLATE CARRIER-RELATED"/>
    <property type="match status" value="1"/>
</dbReference>
<dbReference type="Pfam" id="PF00153">
    <property type="entry name" value="Mito_carr"/>
    <property type="match status" value="3"/>
</dbReference>
<dbReference type="SUPFAM" id="SSF103506">
    <property type="entry name" value="Mitochondrial carrier"/>
    <property type="match status" value="1"/>
</dbReference>
<dbReference type="PROSITE" id="PS50920">
    <property type="entry name" value="SOLCAR"/>
    <property type="match status" value="3"/>
</dbReference>
<evidence type="ECO:0000255" key="1"/>
<evidence type="ECO:0000305" key="2"/>
<accession>Q27151</accession>
<accession>Q94633</accession>
<protein>
    <recommendedName>
        <fullName>Macronuclear solute carrier homolog CR-MSC</fullName>
    </recommendedName>
</protein>
<name>MNCP_OXYTR</name>
<feature type="chain" id="PRO_0000090710" description="Macronuclear solute carrier homolog CR-MSC">
    <location>
        <begin position="1"/>
        <end position="371"/>
    </location>
</feature>
<feature type="transmembrane region" description="Helical; Name=1" evidence="1">
    <location>
        <begin position="22"/>
        <end position="42"/>
    </location>
</feature>
<feature type="transmembrane region" description="Helical; Name=2" evidence="1">
    <location>
        <begin position="89"/>
        <end position="109"/>
    </location>
</feature>
<feature type="transmembrane region" description="Helical; Name=3" evidence="1">
    <location>
        <begin position="126"/>
        <end position="146"/>
    </location>
</feature>
<feature type="transmembrane region" description="Helical; Name=4" evidence="1">
    <location>
        <begin position="184"/>
        <end position="204"/>
    </location>
</feature>
<feature type="transmembrane region" description="Helical; Name=5" evidence="1">
    <location>
        <begin position="221"/>
        <end position="241"/>
    </location>
</feature>
<feature type="transmembrane region" description="Helical; Name=6" evidence="1">
    <location>
        <begin position="281"/>
        <end position="301"/>
    </location>
</feature>
<feature type="repeat" description="Solcar 1">
    <location>
        <begin position="16"/>
        <end position="111"/>
    </location>
</feature>
<feature type="repeat" description="Solcar 2">
    <location>
        <begin position="120"/>
        <end position="208"/>
    </location>
</feature>
<feature type="repeat" description="Solcar 3">
    <location>
        <begin position="215"/>
        <end position="304"/>
    </location>
</feature>
<feature type="sequence conflict" description="In Ref. 2; AAA62489." evidence="2" ref="2">
    <original>G</original>
    <variation>C</variation>
    <location>
        <position position="96"/>
    </location>
</feature>
<feature type="sequence conflict" description="In Ref. 2; AAA62489." evidence="2" ref="2">
    <original>V</original>
    <variation>I</variation>
    <location>
        <position position="168"/>
    </location>
</feature>
<feature type="sequence conflict" description="In Ref. 2; AAA62489." evidence="2" ref="2">
    <original>F</original>
    <variation>I</variation>
    <location>
        <position position="262"/>
    </location>
</feature>
<feature type="sequence conflict" description="In Ref. 2; AAA62489." evidence="2" ref="2">
    <original>A</original>
    <variation>T</variation>
    <location>
        <position position="354"/>
    </location>
</feature>
<feature type="sequence conflict" description="In Ref. 2; AAA62489." evidence="2" ref="2">
    <original>D</original>
    <variation>E</variation>
    <location>
        <position position="366"/>
    </location>
</feature>
<sequence length="371" mass="42548">MPTQMEVEYWRRRYQRMNYERFAAANVIALITHAATQPLDMVRIRSQMLQEGKTFSGLGYQKGWYPFQIMEEIYAAGGGLRKFYSAFDTFFFRTVGYTTARVTAFGYFYDKVNKDPRRVARPDFLVAAGVLGGFIAGVVTNPIDIVYNRMQVDELYPQAARRNYSNTVQGLAKVAEEGALFRGAGANGFKLAAICSSMTNIYDWCKENSYFFFGPHWINRLWGTAVAVAIGTVVSMPFDMIRTRLHTMRPLPNGQMPYNGMFDCFNKIIKYECNSKWMSNFGSFYAGGEAYFLRLFLICYLSQFLVDYYNENYYDQEFWQPQRFHYQSGIDYDIHDPYTDAFNKKLVATYTTAAGGMGAAHPSGKDNLAII</sequence>